<comment type="subcellular location">
    <subcellularLocation>
        <location evidence="1">Cell inner membrane</location>
        <topology evidence="2">Multi-pass membrane protein</topology>
    </subcellularLocation>
</comment>
<comment type="similarity">
    <text evidence="3">Belongs to the SirB2 family.</text>
</comment>
<evidence type="ECO:0000250" key="1">
    <source>
        <dbReference type="UniProtKB" id="Q46755"/>
    </source>
</evidence>
<evidence type="ECO:0000255" key="2"/>
<evidence type="ECO:0000305" key="3"/>
<organism>
    <name type="scientific">Haemophilus influenzae (strain ATCC 51907 / DSM 11121 / KW20 / Rd)</name>
    <dbReference type="NCBI Taxonomy" id="71421"/>
    <lineage>
        <taxon>Bacteria</taxon>
        <taxon>Pseudomonadati</taxon>
        <taxon>Pseudomonadota</taxon>
        <taxon>Gammaproteobacteria</taxon>
        <taxon>Pasteurellales</taxon>
        <taxon>Pasteurellaceae</taxon>
        <taxon>Haemophilus</taxon>
    </lineage>
</organism>
<gene>
    <name type="ordered locus">HI_1253</name>
</gene>
<accession>P44139</accession>
<dbReference type="EMBL" id="L42023">
    <property type="protein sequence ID" value="AAC22903.1"/>
    <property type="molecule type" value="Genomic_DNA"/>
</dbReference>
<dbReference type="PIR" id="D64023">
    <property type="entry name" value="D64023"/>
</dbReference>
<dbReference type="RefSeq" id="NP_439409.1">
    <property type="nucleotide sequence ID" value="NC_000907.1"/>
</dbReference>
<dbReference type="STRING" id="71421.HI_1253"/>
<dbReference type="EnsemblBacteria" id="AAC22903">
    <property type="protein sequence ID" value="AAC22903"/>
    <property type="gene ID" value="HI_1253"/>
</dbReference>
<dbReference type="KEGG" id="hin:HI_1253"/>
<dbReference type="PATRIC" id="fig|71421.8.peg.1305"/>
<dbReference type="eggNOG" id="COG3094">
    <property type="taxonomic scope" value="Bacteria"/>
</dbReference>
<dbReference type="HOGENOM" id="CLU_123860_4_0_6"/>
<dbReference type="OrthoDB" id="5588650at2"/>
<dbReference type="PhylomeDB" id="P44139"/>
<dbReference type="BioCyc" id="HINF71421:G1GJ1-1284-MONOMER"/>
<dbReference type="Proteomes" id="UP000000579">
    <property type="component" value="Chromosome"/>
</dbReference>
<dbReference type="GO" id="GO:0005886">
    <property type="term" value="C:plasma membrane"/>
    <property type="evidence" value="ECO:0000318"/>
    <property type="project" value="GO_Central"/>
</dbReference>
<dbReference type="InterPro" id="IPR007360">
    <property type="entry name" value="SirB"/>
</dbReference>
<dbReference type="PANTHER" id="PTHR39594">
    <property type="entry name" value="PROTEIN YCHQ"/>
    <property type="match status" value="1"/>
</dbReference>
<dbReference type="PANTHER" id="PTHR39594:SF1">
    <property type="entry name" value="PROTEIN YCHQ"/>
    <property type="match status" value="1"/>
</dbReference>
<dbReference type="Pfam" id="PF04247">
    <property type="entry name" value="SirB"/>
    <property type="match status" value="1"/>
</dbReference>
<dbReference type="PIRSF" id="PIRSF005610">
    <property type="entry name" value="SirB"/>
    <property type="match status" value="1"/>
</dbReference>
<reference key="1">
    <citation type="journal article" date="1995" name="Science">
        <title>Whole-genome random sequencing and assembly of Haemophilus influenzae Rd.</title>
        <authorList>
            <person name="Fleischmann R.D."/>
            <person name="Adams M.D."/>
            <person name="White O."/>
            <person name="Clayton R.A."/>
            <person name="Kirkness E.F."/>
            <person name="Kerlavage A.R."/>
            <person name="Bult C.J."/>
            <person name="Tomb J.-F."/>
            <person name="Dougherty B.A."/>
            <person name="Merrick J.M."/>
            <person name="McKenney K."/>
            <person name="Sutton G.G."/>
            <person name="FitzHugh W."/>
            <person name="Fields C.A."/>
            <person name="Gocayne J.D."/>
            <person name="Scott J.D."/>
            <person name="Shirley R."/>
            <person name="Liu L.-I."/>
            <person name="Glodek A."/>
            <person name="Kelley J.M."/>
            <person name="Weidman J.F."/>
            <person name="Phillips C.A."/>
            <person name="Spriggs T."/>
            <person name="Hedblom E."/>
            <person name="Cotton M.D."/>
            <person name="Utterback T.R."/>
            <person name="Hanna M.C."/>
            <person name="Nguyen D.T."/>
            <person name="Saudek D.M."/>
            <person name="Brandon R.C."/>
            <person name="Fine L.D."/>
            <person name="Fritchman J.L."/>
            <person name="Fuhrmann J.L."/>
            <person name="Geoghagen N.S.M."/>
            <person name="Gnehm C.L."/>
            <person name="McDonald L.A."/>
            <person name="Small K.V."/>
            <person name="Fraser C.M."/>
            <person name="Smith H.O."/>
            <person name="Venter J.C."/>
        </authorList>
    </citation>
    <scope>NUCLEOTIDE SEQUENCE [LARGE SCALE GENOMIC DNA]</scope>
    <source>
        <strain>ATCC 51907 / DSM 11121 / KW20 / Rd</strain>
    </source>
</reference>
<keyword id="KW-0997">Cell inner membrane</keyword>
<keyword id="KW-1003">Cell membrane</keyword>
<keyword id="KW-0472">Membrane</keyword>
<keyword id="KW-1185">Reference proteome</keyword>
<keyword id="KW-0812">Transmembrane</keyword>
<keyword id="KW-1133">Transmembrane helix</keyword>
<protein>
    <recommendedName>
        <fullName>Protein HI_1253</fullName>
    </recommendedName>
</protein>
<feature type="chain" id="PRO_0000078015" description="Protein HI_1253">
    <location>
        <begin position="1"/>
        <end position="127"/>
    </location>
</feature>
<feature type="transmembrane region" description="Helical" evidence="2">
    <location>
        <begin position="13"/>
        <end position="33"/>
    </location>
</feature>
<feature type="transmembrane region" description="Helical" evidence="2">
    <location>
        <begin position="61"/>
        <end position="81"/>
    </location>
</feature>
<feature type="transmembrane region" description="Helical" evidence="2">
    <location>
        <begin position="82"/>
        <end position="102"/>
    </location>
</feature>
<feature type="transmembrane region" description="Helical" evidence="2">
    <location>
        <begin position="107"/>
        <end position="127"/>
    </location>
</feature>
<sequence>MNFDRTFLTFLGVIMLVHLHIFFAFLSLALLVIRGAMQLNGKNWRSIKLLKILPHLSDTLLIVSGVVILYLFAFGIEWWLVAKFALLILYIVFAAKFFSKKVSQPKSIFFWLACVSFIGAMLIAYLK</sequence>
<name>Y1253_HAEIN</name>
<proteinExistence type="inferred from homology"/>